<dbReference type="EC" id="4.2.1.11" evidence="1"/>
<dbReference type="EMBL" id="CP000934">
    <property type="protein sequence ID" value="ACE85455.1"/>
    <property type="molecule type" value="Genomic_DNA"/>
</dbReference>
<dbReference type="RefSeq" id="WP_012487825.1">
    <property type="nucleotide sequence ID" value="NC_010995.1"/>
</dbReference>
<dbReference type="SMR" id="B3PJB3"/>
<dbReference type="STRING" id="498211.CJA_2225"/>
<dbReference type="KEGG" id="cja:CJA_2225"/>
<dbReference type="eggNOG" id="COG0148">
    <property type="taxonomic scope" value="Bacteria"/>
</dbReference>
<dbReference type="HOGENOM" id="CLU_031223_2_1_6"/>
<dbReference type="OrthoDB" id="9804716at2"/>
<dbReference type="UniPathway" id="UPA00109">
    <property type="reaction ID" value="UER00187"/>
</dbReference>
<dbReference type="Proteomes" id="UP000001036">
    <property type="component" value="Chromosome"/>
</dbReference>
<dbReference type="GO" id="GO:0009986">
    <property type="term" value="C:cell surface"/>
    <property type="evidence" value="ECO:0007669"/>
    <property type="project" value="UniProtKB-SubCell"/>
</dbReference>
<dbReference type="GO" id="GO:0005576">
    <property type="term" value="C:extracellular region"/>
    <property type="evidence" value="ECO:0007669"/>
    <property type="project" value="UniProtKB-SubCell"/>
</dbReference>
<dbReference type="GO" id="GO:0000015">
    <property type="term" value="C:phosphopyruvate hydratase complex"/>
    <property type="evidence" value="ECO:0007669"/>
    <property type="project" value="InterPro"/>
</dbReference>
<dbReference type="GO" id="GO:0000287">
    <property type="term" value="F:magnesium ion binding"/>
    <property type="evidence" value="ECO:0007669"/>
    <property type="project" value="UniProtKB-UniRule"/>
</dbReference>
<dbReference type="GO" id="GO:0004634">
    <property type="term" value="F:phosphopyruvate hydratase activity"/>
    <property type="evidence" value="ECO:0007669"/>
    <property type="project" value="UniProtKB-UniRule"/>
</dbReference>
<dbReference type="GO" id="GO:0006096">
    <property type="term" value="P:glycolytic process"/>
    <property type="evidence" value="ECO:0007669"/>
    <property type="project" value="UniProtKB-UniRule"/>
</dbReference>
<dbReference type="CDD" id="cd03313">
    <property type="entry name" value="enolase"/>
    <property type="match status" value="1"/>
</dbReference>
<dbReference type="FunFam" id="3.20.20.120:FF:000001">
    <property type="entry name" value="Enolase"/>
    <property type="match status" value="1"/>
</dbReference>
<dbReference type="FunFam" id="3.30.390.10:FF:000001">
    <property type="entry name" value="Enolase"/>
    <property type="match status" value="1"/>
</dbReference>
<dbReference type="Gene3D" id="3.20.20.120">
    <property type="entry name" value="Enolase-like C-terminal domain"/>
    <property type="match status" value="1"/>
</dbReference>
<dbReference type="Gene3D" id="3.30.390.10">
    <property type="entry name" value="Enolase-like, N-terminal domain"/>
    <property type="match status" value="1"/>
</dbReference>
<dbReference type="HAMAP" id="MF_00318">
    <property type="entry name" value="Enolase"/>
    <property type="match status" value="1"/>
</dbReference>
<dbReference type="InterPro" id="IPR000941">
    <property type="entry name" value="Enolase"/>
</dbReference>
<dbReference type="InterPro" id="IPR036849">
    <property type="entry name" value="Enolase-like_C_sf"/>
</dbReference>
<dbReference type="InterPro" id="IPR029017">
    <property type="entry name" value="Enolase-like_N"/>
</dbReference>
<dbReference type="InterPro" id="IPR020810">
    <property type="entry name" value="Enolase_C"/>
</dbReference>
<dbReference type="InterPro" id="IPR020809">
    <property type="entry name" value="Enolase_CS"/>
</dbReference>
<dbReference type="InterPro" id="IPR020811">
    <property type="entry name" value="Enolase_N"/>
</dbReference>
<dbReference type="NCBIfam" id="TIGR01060">
    <property type="entry name" value="eno"/>
    <property type="match status" value="1"/>
</dbReference>
<dbReference type="PANTHER" id="PTHR11902">
    <property type="entry name" value="ENOLASE"/>
    <property type="match status" value="1"/>
</dbReference>
<dbReference type="PANTHER" id="PTHR11902:SF1">
    <property type="entry name" value="ENOLASE"/>
    <property type="match status" value="1"/>
</dbReference>
<dbReference type="Pfam" id="PF00113">
    <property type="entry name" value="Enolase_C"/>
    <property type="match status" value="1"/>
</dbReference>
<dbReference type="Pfam" id="PF03952">
    <property type="entry name" value="Enolase_N"/>
    <property type="match status" value="1"/>
</dbReference>
<dbReference type="PIRSF" id="PIRSF001400">
    <property type="entry name" value="Enolase"/>
    <property type="match status" value="1"/>
</dbReference>
<dbReference type="PRINTS" id="PR00148">
    <property type="entry name" value="ENOLASE"/>
</dbReference>
<dbReference type="SFLD" id="SFLDS00001">
    <property type="entry name" value="Enolase"/>
    <property type="match status" value="1"/>
</dbReference>
<dbReference type="SFLD" id="SFLDF00002">
    <property type="entry name" value="enolase"/>
    <property type="match status" value="1"/>
</dbReference>
<dbReference type="SMART" id="SM01192">
    <property type="entry name" value="Enolase_C"/>
    <property type="match status" value="1"/>
</dbReference>
<dbReference type="SMART" id="SM01193">
    <property type="entry name" value="Enolase_N"/>
    <property type="match status" value="1"/>
</dbReference>
<dbReference type="SUPFAM" id="SSF51604">
    <property type="entry name" value="Enolase C-terminal domain-like"/>
    <property type="match status" value="1"/>
</dbReference>
<dbReference type="SUPFAM" id="SSF54826">
    <property type="entry name" value="Enolase N-terminal domain-like"/>
    <property type="match status" value="1"/>
</dbReference>
<dbReference type="PROSITE" id="PS00164">
    <property type="entry name" value="ENOLASE"/>
    <property type="match status" value="1"/>
</dbReference>
<comment type="function">
    <text evidence="1">Catalyzes the reversible conversion of 2-phosphoglycerate (2-PG) into phosphoenolpyruvate (PEP). It is essential for the degradation of carbohydrates via glycolysis.</text>
</comment>
<comment type="catalytic activity">
    <reaction evidence="1">
        <text>(2R)-2-phosphoglycerate = phosphoenolpyruvate + H2O</text>
        <dbReference type="Rhea" id="RHEA:10164"/>
        <dbReference type="ChEBI" id="CHEBI:15377"/>
        <dbReference type="ChEBI" id="CHEBI:58289"/>
        <dbReference type="ChEBI" id="CHEBI:58702"/>
        <dbReference type="EC" id="4.2.1.11"/>
    </reaction>
</comment>
<comment type="cofactor">
    <cofactor evidence="1">
        <name>Mg(2+)</name>
        <dbReference type="ChEBI" id="CHEBI:18420"/>
    </cofactor>
    <text evidence="1">Binds a second Mg(2+) ion via substrate during catalysis.</text>
</comment>
<comment type="pathway">
    <text evidence="1">Carbohydrate degradation; glycolysis; pyruvate from D-glyceraldehyde 3-phosphate: step 4/5.</text>
</comment>
<comment type="subunit">
    <text evidence="1">Component of the RNA degradosome, a multiprotein complex involved in RNA processing and mRNA degradation.</text>
</comment>
<comment type="subcellular location">
    <subcellularLocation>
        <location evidence="1">Cytoplasm</location>
    </subcellularLocation>
    <subcellularLocation>
        <location evidence="1">Secreted</location>
    </subcellularLocation>
    <subcellularLocation>
        <location evidence="1">Cell surface</location>
    </subcellularLocation>
    <text evidence="1">Fractions of enolase are present in both the cytoplasm and on the cell surface.</text>
</comment>
<comment type="similarity">
    <text evidence="1">Belongs to the enolase family.</text>
</comment>
<accession>B3PJB3</accession>
<gene>
    <name evidence="1" type="primary">eno</name>
    <name type="ordered locus">CJA_2225</name>
</gene>
<feature type="chain" id="PRO_1000115842" description="Enolase">
    <location>
        <begin position="1"/>
        <end position="429"/>
    </location>
</feature>
<feature type="active site" description="Proton donor" evidence="1">
    <location>
        <position position="209"/>
    </location>
</feature>
<feature type="active site" description="Proton acceptor" evidence="1">
    <location>
        <position position="341"/>
    </location>
</feature>
<feature type="binding site" evidence="1">
    <location>
        <position position="167"/>
    </location>
    <ligand>
        <name>(2R)-2-phosphoglycerate</name>
        <dbReference type="ChEBI" id="CHEBI:58289"/>
    </ligand>
</feature>
<feature type="binding site" evidence="1">
    <location>
        <position position="246"/>
    </location>
    <ligand>
        <name>Mg(2+)</name>
        <dbReference type="ChEBI" id="CHEBI:18420"/>
    </ligand>
</feature>
<feature type="binding site" evidence="1">
    <location>
        <position position="289"/>
    </location>
    <ligand>
        <name>Mg(2+)</name>
        <dbReference type="ChEBI" id="CHEBI:18420"/>
    </ligand>
</feature>
<feature type="binding site" evidence="1">
    <location>
        <position position="316"/>
    </location>
    <ligand>
        <name>Mg(2+)</name>
        <dbReference type="ChEBI" id="CHEBI:18420"/>
    </ligand>
</feature>
<feature type="binding site" evidence="1">
    <location>
        <position position="341"/>
    </location>
    <ligand>
        <name>(2R)-2-phosphoglycerate</name>
        <dbReference type="ChEBI" id="CHEBI:58289"/>
    </ligand>
</feature>
<feature type="binding site" evidence="1">
    <location>
        <position position="370"/>
    </location>
    <ligand>
        <name>(2R)-2-phosphoglycerate</name>
        <dbReference type="ChEBI" id="CHEBI:58289"/>
    </ligand>
</feature>
<feature type="binding site" evidence="1">
    <location>
        <position position="371"/>
    </location>
    <ligand>
        <name>(2R)-2-phosphoglycerate</name>
        <dbReference type="ChEBI" id="CHEBI:58289"/>
    </ligand>
</feature>
<feature type="binding site" evidence="1">
    <location>
        <position position="392"/>
    </location>
    <ligand>
        <name>(2R)-2-phosphoglycerate</name>
        <dbReference type="ChEBI" id="CHEBI:58289"/>
    </ligand>
</feature>
<evidence type="ECO:0000255" key="1">
    <source>
        <dbReference type="HAMAP-Rule" id="MF_00318"/>
    </source>
</evidence>
<protein>
    <recommendedName>
        <fullName evidence="1">Enolase</fullName>
        <ecNumber evidence="1">4.2.1.11</ecNumber>
    </recommendedName>
    <alternativeName>
        <fullName evidence="1">2-phospho-D-glycerate hydro-lyase</fullName>
    </alternativeName>
    <alternativeName>
        <fullName evidence="1">2-phosphoglycerate dehydratase</fullName>
    </alternativeName>
</protein>
<organism>
    <name type="scientific">Cellvibrio japonicus (strain Ueda107)</name>
    <name type="common">Pseudomonas fluorescens subsp. cellulosa</name>
    <dbReference type="NCBI Taxonomy" id="498211"/>
    <lineage>
        <taxon>Bacteria</taxon>
        <taxon>Pseudomonadati</taxon>
        <taxon>Pseudomonadota</taxon>
        <taxon>Gammaproteobacteria</taxon>
        <taxon>Cellvibrionales</taxon>
        <taxon>Cellvibrionaceae</taxon>
        <taxon>Cellvibrio</taxon>
    </lineage>
</organism>
<sequence>MTKIVDIKAFEVLDSRGNPTVMAEVILESGAVGSACAPSGASTGSREALELRDGDKSRYLGKGVLTAVNNINTTIKNLLVGKDALDQRALDKAMIDADGTDNKSVLGANAILAVSLAAAKAAAVAKKVPLYAHIADLNGTPGKYSMPVPMMNIINGGEHADNNVDIQEFMVQPVGAKTFAEALRIGAEIFHNLKKILHDKGLNTAVGDEGGFAPNLPSNEEALKVIIVAVEKAGYKLGEDVTLALDCASSEFYKDGQYDLAGEGKVFSSAEFSDYLADLANKYPIISIEDGKDESDWDGWADLTNKIGNKVQLVGDDLFVTNTRILKEGIEKKIANSILIKFNQIGSLSETLDAIKMAQDAGYTAVISHRSGETEDTTIADLAVATAAGQIKTGSLCRSDRVSKYNRLLRIEAELGAAAPYKGRAEFKS</sequence>
<reference key="1">
    <citation type="journal article" date="2008" name="J. Bacteriol.">
        <title>Insights into plant cell wall degradation from the genome sequence of the soil bacterium Cellvibrio japonicus.</title>
        <authorList>
            <person name="DeBoy R.T."/>
            <person name="Mongodin E.F."/>
            <person name="Fouts D.E."/>
            <person name="Tailford L.E."/>
            <person name="Khouri H."/>
            <person name="Emerson J.B."/>
            <person name="Mohamoud Y."/>
            <person name="Watkins K."/>
            <person name="Henrissat B."/>
            <person name="Gilbert H.J."/>
            <person name="Nelson K.E."/>
        </authorList>
    </citation>
    <scope>NUCLEOTIDE SEQUENCE [LARGE SCALE GENOMIC DNA]</scope>
    <source>
        <strain>Ueda107</strain>
    </source>
</reference>
<proteinExistence type="inferred from homology"/>
<keyword id="KW-0963">Cytoplasm</keyword>
<keyword id="KW-0324">Glycolysis</keyword>
<keyword id="KW-0456">Lyase</keyword>
<keyword id="KW-0460">Magnesium</keyword>
<keyword id="KW-0479">Metal-binding</keyword>
<keyword id="KW-1185">Reference proteome</keyword>
<keyword id="KW-0964">Secreted</keyword>
<name>ENO_CELJU</name>